<accession>G0HV86</accession>
<comment type="function">
    <text evidence="5">S-layer protein. The S-layer is a paracrystalline mono-layered assembly of proteins which coat the surface of the cell. In H.hispanica, the S-layer contains two different glycoproteins, Slg1 and Slg2, which share highly similar amino acid sequences.</text>
</comment>
<comment type="subcellular location">
    <subcellularLocation>
        <location evidence="5">Secreted</location>
        <location evidence="5">Cell wall</location>
        <location evidence="5">S-layer</location>
    </subcellularLocation>
    <subcellularLocation>
        <location evidence="5">Cell membrane</location>
    </subcellularLocation>
</comment>
<comment type="PTM">
    <text evidence="5">N-glycosylated on Asn-307; this N-linked glycan is a branched trisaccharide containing 2-amino-6-sulfo-2,6-dideoxy-glucose (sulfoquinovosamine).</text>
</comment>
<comment type="PTM">
    <text evidence="5">O-glycosylated on Thr residues within the DTPE repeats in the C-terminal region; glycans consist of Glc-Gal disaccharides.</text>
</comment>
<comment type="PTM">
    <text evidence="1">Cleaved by the archaeosortase ArtA at the C-terminus, with removal of a short hydrophobic segment.</text>
</comment>
<comment type="PTM">
    <text evidence="1">Lipidation.</text>
</comment>
<comment type="similarity">
    <text evidence="7">Belongs to the halobacterial S-layer protein family.</text>
</comment>
<proteinExistence type="evidence at protein level"/>
<dbReference type="EMBL" id="CP002921">
    <property type="protein sequence ID" value="AEM57588.1"/>
    <property type="molecule type" value="Genomic_DNA"/>
</dbReference>
<dbReference type="RefSeq" id="WP_014040753.1">
    <property type="nucleotide sequence ID" value="NC_015948.1"/>
</dbReference>
<dbReference type="STRING" id="634497.HAH_1992"/>
<dbReference type="GlyCosmos" id="G0HV86">
    <property type="glycosylation" value="23 sites, No reported glycans"/>
</dbReference>
<dbReference type="iPTMnet" id="G0HV86"/>
<dbReference type="KEGG" id="hhi:HAH_1992"/>
<dbReference type="eggNOG" id="arCOG06273">
    <property type="taxonomic scope" value="Archaea"/>
</dbReference>
<dbReference type="HOGENOM" id="CLU_015552_0_0_2"/>
<dbReference type="OrthoDB" id="325633at2157"/>
<dbReference type="Proteomes" id="UP000005629">
    <property type="component" value="Chromosome I"/>
</dbReference>
<dbReference type="GO" id="GO:0005576">
    <property type="term" value="C:extracellular region"/>
    <property type="evidence" value="ECO:0007669"/>
    <property type="project" value="UniProtKB-KW"/>
</dbReference>
<dbReference type="GO" id="GO:0005886">
    <property type="term" value="C:plasma membrane"/>
    <property type="evidence" value="ECO:0007669"/>
    <property type="project" value="UniProtKB-SubCell"/>
</dbReference>
<dbReference type="GO" id="GO:0030115">
    <property type="term" value="C:S-layer"/>
    <property type="evidence" value="ECO:0007669"/>
    <property type="project" value="UniProtKB-SubCell"/>
</dbReference>
<dbReference type="GO" id="GO:0071555">
    <property type="term" value="P:cell wall organization"/>
    <property type="evidence" value="ECO:0007669"/>
    <property type="project" value="UniProtKB-KW"/>
</dbReference>
<dbReference type="InterPro" id="IPR057149">
    <property type="entry name" value="DUF7827"/>
</dbReference>
<dbReference type="InterPro" id="IPR026371">
    <property type="entry name" value="PGF_CTERM"/>
</dbReference>
<dbReference type="InterPro" id="IPR055706">
    <property type="entry name" value="Slg1/2_DUF7282"/>
</dbReference>
<dbReference type="InterPro" id="IPR026452">
    <property type="entry name" value="Surf_glycop_sig_pep"/>
</dbReference>
<dbReference type="NCBIfam" id="TIGR04207">
    <property type="entry name" value="halo_sig_pep"/>
    <property type="match status" value="1"/>
</dbReference>
<dbReference type="NCBIfam" id="NF045517">
    <property type="entry name" value="halo_surf_dom"/>
    <property type="match status" value="1"/>
</dbReference>
<dbReference type="NCBIfam" id="TIGR04126">
    <property type="entry name" value="PGF_CTERM"/>
    <property type="match status" value="1"/>
</dbReference>
<dbReference type="Pfam" id="PF23951">
    <property type="entry name" value="DUF7282"/>
    <property type="match status" value="1"/>
</dbReference>
<dbReference type="Pfam" id="PF25162">
    <property type="entry name" value="DUF7827"/>
    <property type="match status" value="1"/>
</dbReference>
<dbReference type="Pfam" id="PF18204">
    <property type="entry name" value="PGF-CTERM"/>
    <property type="match status" value="1"/>
</dbReference>
<sequence length="922" mass="96911">MTGNSDKVRSLFLTALMVFSVFAGTIAFSGGAAAAANVSVQQAAEYDSGTVELALNGSTGSPVTTGDINIYIDGNENPSNYGVSSVDTTDDGTTGRLQFSLDQDVQPNRNLTVEVSGLTGGDNTVVAEDIDVTSQTIDADDDSGDTNAFRGEVLAIRADGGEGDADDATSSTQIVVEDSNGAVVTQDTYTANSKVYTYETENLDTGEEYEVTVGGTADENITISNLDLNVNIDDDVGDGANIDDTDTLAVNVSTTRGGEPANATLFNEDDDKVATQIKSLKGNENVVFDFGNQSADDSPYYVKVTDNQTGVSAESDQINVSESGEGDASFETSTVQDEVGDVTNITVQMGNTENAVINVGSQNDDNYVIQGQLEDDNGDGEVTVQFNSYTAGTDNNNTVLTVPGDDDLDEVEEKGSFTDSRNSLDEDVLEPQSYSINVTAGTSPDVTSPDTVGTLRLNENSVESMQTWVAPSDADIDDEDIDIYDRIGENLTQSDDVAVEDVVVHEIQASGIEGALEYEQEDNGSSDVTDAFIAAADTTPDRINDDTSASGLQLYVNRTDVGANADADPINFANSSSAVTVVDDPDNNTYFVALDTEDVEFESGNTITEEEDTEINATFSVQEGPLTDDSSSESELYTTSERNAELNLDDDGFVTVGAAAGQTVSGDTNVAPGSELEVEMESESEANPFVERPEATVGPNGTYVATEDFSDYSAGTNFTVQTLDVDGDSDFSDEEDGRIVEADTATVSISDQESDGSEVVVDSAQLSSGGFIAIHAGDASGDVVGNSEYLEAGTYNDLTITLDEPMDENFTAVAMPHQDTNGNEEYDFPGDDGPYTQNGSAVTDSANVTVSAEEPEDTPEDTPEDTPEDTPEDTPEDTPADTPEDTPDTGTETTEAEGPGFTAAIALIALVAAALLAVRRDN</sequence>
<evidence type="ECO:0000250" key="1">
    <source>
        <dbReference type="UniProtKB" id="P25062"/>
    </source>
</evidence>
<evidence type="ECO:0000255" key="2"/>
<evidence type="ECO:0000255" key="3">
    <source>
        <dbReference type="PROSITE-ProRule" id="PRU00498"/>
    </source>
</evidence>
<evidence type="ECO:0000256" key="4">
    <source>
        <dbReference type="SAM" id="MobiDB-lite"/>
    </source>
</evidence>
<evidence type="ECO:0000269" key="5">
    <source>
    </source>
</evidence>
<evidence type="ECO:0000303" key="6">
    <source>
    </source>
</evidence>
<evidence type="ECO:0000305" key="7"/>
<evidence type="ECO:0000312" key="8">
    <source>
        <dbReference type="EMBL" id="AEM57588.1"/>
    </source>
</evidence>
<gene>
    <name evidence="6" type="primary">slg2</name>
    <name evidence="8" type="ordered locus">HAH_1992</name>
</gene>
<keyword id="KW-1003">Cell membrane</keyword>
<keyword id="KW-0134">Cell wall</keyword>
<keyword id="KW-0961">Cell wall biogenesis/degradation</keyword>
<keyword id="KW-0325">Glycoprotein</keyword>
<keyword id="KW-0449">Lipoprotein</keyword>
<keyword id="KW-0472">Membrane</keyword>
<keyword id="KW-0701">S-layer</keyword>
<keyword id="KW-0964">Secreted</keyword>
<keyword id="KW-0732">Signal</keyword>
<keyword id="KW-0812">Transmembrane</keyword>
<keyword id="KW-1133">Transmembrane helix</keyword>
<reference key="1">
    <citation type="journal article" date="2011" name="J. Bacteriol.">
        <title>Complete genome sequence of Haloarcula hispanica, a model haloarchaeon for studying genetics, metabolism, and virus-host interaction.</title>
        <authorList>
            <person name="Liu H."/>
            <person name="Wu Z."/>
            <person name="Li M."/>
            <person name="Zhang F."/>
            <person name="Zheng H."/>
            <person name="Han J."/>
            <person name="Liu J."/>
            <person name="Zhou J."/>
            <person name="Wang S."/>
            <person name="Xiang H."/>
        </authorList>
    </citation>
    <scope>NUCLEOTIDE SEQUENCE [LARGE SCALE GENOMIC DNA]</scope>
    <source>
        <strain>ATCC 33960 / DSM 4426 / JCM 8911 / NBRC 102182 / NCIMB 2187 / VKM B-1755</strain>
    </source>
</reference>
<reference key="2">
    <citation type="journal article" date="2015" name="Glycobiology">
        <title>Identification of the S-layer glycoproteins and their covalently linked glycans in the halophilic archaeon Haloarcula hispanica.</title>
        <authorList>
            <person name="Lu H."/>
            <person name="Lue Y."/>
            <person name="Ren J."/>
            <person name="Wang Z."/>
            <person name="Wang Q."/>
            <person name="Luo Y."/>
            <person name="Han J."/>
            <person name="Xiang H."/>
            <person name="Du Y."/>
            <person name="Jin C."/>
        </authorList>
    </citation>
    <scope>FUNCTION</scope>
    <scope>SUBCELLULAR LOCATION</scope>
    <scope>GLYCOSYLATION AT ASN-307</scope>
</reference>
<name>CSG2_HALHT</name>
<organism>
    <name type="scientific">Haloarcula hispanica (strain ATCC 33960 / DSM 4426 / JCM 8911 / NBRC 102182 / NCIMB 2187 / VKM B-1755)</name>
    <dbReference type="NCBI Taxonomy" id="634497"/>
    <lineage>
        <taxon>Archaea</taxon>
        <taxon>Methanobacteriati</taxon>
        <taxon>Methanobacteriota</taxon>
        <taxon>Stenosarchaea group</taxon>
        <taxon>Halobacteria</taxon>
        <taxon>Halobacteriales</taxon>
        <taxon>Haloarculaceae</taxon>
        <taxon>Haloarcula</taxon>
    </lineage>
</organism>
<feature type="signal peptide" evidence="2">
    <location>
        <begin position="1"/>
        <end position="23"/>
    </location>
</feature>
<feature type="chain" id="PRO_0000444248" description="Cell surface glycoprotein 2" evidence="2">
    <location>
        <begin position="24"/>
        <end status="unknown"/>
    </location>
</feature>
<feature type="propeptide" id="PRO_0000444249" description="Removed by archaeosortase" evidence="1">
    <location>
        <begin status="unknown"/>
        <end position="922"/>
    </location>
</feature>
<feature type="transmembrane region" description="Helical" evidence="2">
    <location>
        <begin position="898"/>
        <end position="918"/>
    </location>
</feature>
<feature type="region of interest" description="Disordered" evidence="4">
    <location>
        <begin position="816"/>
        <end position="899"/>
    </location>
</feature>
<feature type="short sequence motif" description="PGF sorting signal" evidence="1">
    <location>
        <begin position="899"/>
        <end position="901"/>
    </location>
</feature>
<feature type="compositionally biased region" description="Polar residues" evidence="4">
    <location>
        <begin position="835"/>
        <end position="850"/>
    </location>
</feature>
<feature type="compositionally biased region" description="Acidic residues" evidence="4">
    <location>
        <begin position="853"/>
        <end position="887"/>
    </location>
</feature>
<feature type="compositionally biased region" description="Low complexity" evidence="4">
    <location>
        <begin position="888"/>
        <end position="899"/>
    </location>
</feature>
<feature type="glycosylation site" description="N-linked (GlcNAc...) asparagine" evidence="3">
    <location>
        <position position="37"/>
    </location>
</feature>
<feature type="glycosylation site" description="N-linked (GlcNAc...) asparagine" evidence="3">
    <location>
        <position position="56"/>
    </location>
</feature>
<feature type="glycosylation site" description="N-linked (GlcNAc...) asparagine" evidence="3">
    <location>
        <position position="110"/>
    </location>
</feature>
<feature type="glycosylation site" description="N-linked (GlcNAc...) asparagine" evidence="3">
    <location>
        <position position="220"/>
    </location>
</feature>
<feature type="glycosylation site" description="N-linked (GlcNAc...) asparagine" evidence="3">
    <location>
        <position position="251"/>
    </location>
</feature>
<feature type="glycosylation site" description="N-linked (GlcNAc...) asparagine" evidence="3">
    <location>
        <position position="262"/>
    </location>
</feature>
<feature type="glycosylation site" description="N-linked (GlcNAc...) asparagine" evidence="3">
    <location>
        <position position="292"/>
    </location>
</feature>
<feature type="glycosylation site" description="N-linked (GalNAc...) asparagine" evidence="5">
    <location>
        <position position="307"/>
    </location>
</feature>
<feature type="glycosylation site" description="N-linked (GlcNAc...) asparagine" evidence="3">
    <location>
        <position position="319"/>
    </location>
</feature>
<feature type="glycosylation site" description="N-linked (GlcNAc...) asparagine" evidence="3">
    <location>
        <position position="344"/>
    </location>
</feature>
<feature type="glycosylation site" description="N-linked (GlcNAc...) asparagine" evidence="3">
    <location>
        <position position="396"/>
    </location>
</feature>
<feature type="glycosylation site" description="N-linked (GlcNAc...) asparagine" evidence="3">
    <location>
        <position position="437"/>
    </location>
</feature>
<feature type="glycosylation site" description="N-linked (GlcNAc...) asparagine" evidence="3">
    <location>
        <position position="490"/>
    </location>
</feature>
<feature type="glycosylation site" description="N-linked (GlcNAc...) asparagine" evidence="3">
    <location>
        <position position="523"/>
    </location>
</feature>
<feature type="glycosylation site" description="N-linked (GlcNAc...) asparagine" evidence="3">
    <location>
        <position position="557"/>
    </location>
</feature>
<feature type="glycosylation site" description="N-linked (GlcNAc...) asparagine" evidence="3">
    <location>
        <position position="574"/>
    </location>
</feature>
<feature type="glycosylation site" description="N-linked (GlcNAc...) asparagine" evidence="3">
    <location>
        <position position="587"/>
    </location>
</feature>
<feature type="glycosylation site" description="N-linked (GlcNAc...) asparagine" evidence="3">
    <location>
        <position position="616"/>
    </location>
</feature>
<feature type="glycosylation site" description="N-linked (GlcNAc...) asparagine" evidence="3">
    <location>
        <position position="700"/>
    </location>
</feature>
<feature type="glycosylation site" description="N-linked (GlcNAc...) asparagine" evidence="3">
    <location>
        <position position="717"/>
    </location>
</feature>
<feature type="glycosylation site" description="N-linked (GlcNAc...) asparagine" evidence="3">
    <location>
        <position position="809"/>
    </location>
</feature>
<feature type="glycosylation site" description="N-linked (GlcNAc...) asparagine" evidence="3">
    <location>
        <position position="838"/>
    </location>
</feature>
<feature type="glycosylation site" description="N-linked (GlcNAc...) asparagine" evidence="3">
    <location>
        <position position="847"/>
    </location>
</feature>
<protein>
    <recommendedName>
        <fullName evidence="7">Cell surface glycoprotein 2</fullName>
    </recommendedName>
    <alternativeName>
        <fullName evidence="6">S-layer glycoprotein 2</fullName>
    </alternativeName>
</protein>